<accession>Q5E2P2</accession>
<name>RSMH_ALIF1</name>
<comment type="function">
    <text evidence="1">Specifically methylates the N4 position of cytidine in position 1402 (C1402) of 16S rRNA.</text>
</comment>
<comment type="catalytic activity">
    <reaction evidence="1">
        <text>cytidine(1402) in 16S rRNA + S-adenosyl-L-methionine = N(4)-methylcytidine(1402) in 16S rRNA + S-adenosyl-L-homocysteine + H(+)</text>
        <dbReference type="Rhea" id="RHEA:42928"/>
        <dbReference type="Rhea" id="RHEA-COMP:10286"/>
        <dbReference type="Rhea" id="RHEA-COMP:10287"/>
        <dbReference type="ChEBI" id="CHEBI:15378"/>
        <dbReference type="ChEBI" id="CHEBI:57856"/>
        <dbReference type="ChEBI" id="CHEBI:59789"/>
        <dbReference type="ChEBI" id="CHEBI:74506"/>
        <dbReference type="ChEBI" id="CHEBI:82748"/>
        <dbReference type="EC" id="2.1.1.199"/>
    </reaction>
</comment>
<comment type="subcellular location">
    <subcellularLocation>
        <location evidence="1">Cytoplasm</location>
    </subcellularLocation>
</comment>
<comment type="similarity">
    <text evidence="1">Belongs to the methyltransferase superfamily. RsmH family.</text>
</comment>
<sequence length="316" mass="35230">MSEQFQHVSVLLHESIDGLAIKPDGIYIDGTFGRGGHSRQILSQLGENGRLYSIDRDPQAIAEAKTITDPKFTIIHGPFSGLKQYVEELDLVGKIDGVLLDLGVSSPQLDDAERGFSFMKDGPLDMRMDPTSGIPVSQWLQEADVEDITWVIREFGEDKHAWRIAKGIVAYLENEENEPLTRTSQLAKLISEVAPKSFKEKKHPATRAFQAFRIYINSELDEIDTALKGALDVLAPEGRLSVISFHSLEDRMVKHFIRKESKGPQVPHGLPLTEEQIKALGSAKMKPVGKAIKPTKNEVNENVRSRSSVLRIAERL</sequence>
<feature type="chain" id="PRO_0000108742" description="Ribosomal RNA small subunit methyltransferase H">
    <location>
        <begin position="1"/>
        <end position="316"/>
    </location>
</feature>
<feature type="binding site" evidence="1">
    <location>
        <begin position="35"/>
        <end position="37"/>
    </location>
    <ligand>
        <name>S-adenosyl-L-methionine</name>
        <dbReference type="ChEBI" id="CHEBI:59789"/>
    </ligand>
</feature>
<feature type="binding site" evidence="1">
    <location>
        <position position="55"/>
    </location>
    <ligand>
        <name>S-adenosyl-L-methionine</name>
        <dbReference type="ChEBI" id="CHEBI:59789"/>
    </ligand>
</feature>
<feature type="binding site" evidence="1">
    <location>
        <position position="79"/>
    </location>
    <ligand>
        <name>S-adenosyl-L-methionine</name>
        <dbReference type="ChEBI" id="CHEBI:59789"/>
    </ligand>
</feature>
<feature type="binding site" evidence="1">
    <location>
        <position position="101"/>
    </location>
    <ligand>
        <name>S-adenosyl-L-methionine</name>
        <dbReference type="ChEBI" id="CHEBI:59789"/>
    </ligand>
</feature>
<feature type="binding site" evidence="1">
    <location>
        <position position="108"/>
    </location>
    <ligand>
        <name>S-adenosyl-L-methionine</name>
        <dbReference type="ChEBI" id="CHEBI:59789"/>
    </ligand>
</feature>
<organism>
    <name type="scientific">Aliivibrio fischeri (strain ATCC 700601 / ES114)</name>
    <name type="common">Vibrio fischeri</name>
    <dbReference type="NCBI Taxonomy" id="312309"/>
    <lineage>
        <taxon>Bacteria</taxon>
        <taxon>Pseudomonadati</taxon>
        <taxon>Pseudomonadota</taxon>
        <taxon>Gammaproteobacteria</taxon>
        <taxon>Vibrionales</taxon>
        <taxon>Vibrionaceae</taxon>
        <taxon>Aliivibrio</taxon>
    </lineage>
</organism>
<dbReference type="EC" id="2.1.1.199" evidence="1"/>
<dbReference type="EMBL" id="CP000020">
    <property type="protein sequence ID" value="AAW86704.1"/>
    <property type="molecule type" value="Genomic_DNA"/>
</dbReference>
<dbReference type="RefSeq" id="WP_011262638.1">
    <property type="nucleotide sequence ID" value="NC_006840.2"/>
</dbReference>
<dbReference type="RefSeq" id="YP_205592.1">
    <property type="nucleotide sequence ID" value="NC_006840.2"/>
</dbReference>
<dbReference type="SMR" id="Q5E2P2"/>
<dbReference type="STRING" id="312309.VF_2209"/>
<dbReference type="EnsemblBacteria" id="AAW86704">
    <property type="protein sequence ID" value="AAW86704"/>
    <property type="gene ID" value="VF_2209"/>
</dbReference>
<dbReference type="GeneID" id="54164925"/>
<dbReference type="KEGG" id="vfi:VF_2209"/>
<dbReference type="PATRIC" id="fig|312309.11.peg.2248"/>
<dbReference type="eggNOG" id="COG0275">
    <property type="taxonomic scope" value="Bacteria"/>
</dbReference>
<dbReference type="HOGENOM" id="CLU_038422_2_0_6"/>
<dbReference type="OrthoDB" id="9806637at2"/>
<dbReference type="Proteomes" id="UP000000537">
    <property type="component" value="Chromosome I"/>
</dbReference>
<dbReference type="GO" id="GO:0005737">
    <property type="term" value="C:cytoplasm"/>
    <property type="evidence" value="ECO:0007669"/>
    <property type="project" value="UniProtKB-SubCell"/>
</dbReference>
<dbReference type="GO" id="GO:0071424">
    <property type="term" value="F:rRNA (cytosine-N4-)-methyltransferase activity"/>
    <property type="evidence" value="ECO:0007669"/>
    <property type="project" value="UniProtKB-UniRule"/>
</dbReference>
<dbReference type="GO" id="GO:0070475">
    <property type="term" value="P:rRNA base methylation"/>
    <property type="evidence" value="ECO:0007669"/>
    <property type="project" value="UniProtKB-UniRule"/>
</dbReference>
<dbReference type="FunFam" id="1.10.150.170:FF:000001">
    <property type="entry name" value="Ribosomal RNA small subunit methyltransferase H"/>
    <property type="match status" value="1"/>
</dbReference>
<dbReference type="Gene3D" id="1.10.150.170">
    <property type="entry name" value="Putative methyltransferase TM0872, insert domain"/>
    <property type="match status" value="1"/>
</dbReference>
<dbReference type="Gene3D" id="3.40.50.150">
    <property type="entry name" value="Vaccinia Virus protein VP39"/>
    <property type="match status" value="1"/>
</dbReference>
<dbReference type="HAMAP" id="MF_01007">
    <property type="entry name" value="16SrRNA_methyltr_H"/>
    <property type="match status" value="1"/>
</dbReference>
<dbReference type="InterPro" id="IPR002903">
    <property type="entry name" value="RsmH"/>
</dbReference>
<dbReference type="InterPro" id="IPR023397">
    <property type="entry name" value="SAM-dep_MeTrfase_MraW_recog"/>
</dbReference>
<dbReference type="InterPro" id="IPR029063">
    <property type="entry name" value="SAM-dependent_MTases_sf"/>
</dbReference>
<dbReference type="NCBIfam" id="TIGR00006">
    <property type="entry name" value="16S rRNA (cytosine(1402)-N(4))-methyltransferase RsmH"/>
    <property type="match status" value="1"/>
</dbReference>
<dbReference type="PANTHER" id="PTHR11265:SF0">
    <property type="entry name" value="12S RRNA N4-METHYLCYTIDINE METHYLTRANSFERASE"/>
    <property type="match status" value="1"/>
</dbReference>
<dbReference type="PANTHER" id="PTHR11265">
    <property type="entry name" value="S-ADENOSYL-METHYLTRANSFERASE MRAW"/>
    <property type="match status" value="1"/>
</dbReference>
<dbReference type="Pfam" id="PF01795">
    <property type="entry name" value="Methyltransf_5"/>
    <property type="match status" value="1"/>
</dbReference>
<dbReference type="PIRSF" id="PIRSF004486">
    <property type="entry name" value="MraW"/>
    <property type="match status" value="1"/>
</dbReference>
<dbReference type="SUPFAM" id="SSF81799">
    <property type="entry name" value="Putative methyltransferase TM0872, insert domain"/>
    <property type="match status" value="1"/>
</dbReference>
<dbReference type="SUPFAM" id="SSF53335">
    <property type="entry name" value="S-adenosyl-L-methionine-dependent methyltransferases"/>
    <property type="match status" value="1"/>
</dbReference>
<gene>
    <name evidence="1" type="primary">rsmH</name>
    <name type="synonym">mraW</name>
    <name type="ordered locus">VF_2209</name>
</gene>
<keyword id="KW-0963">Cytoplasm</keyword>
<keyword id="KW-0489">Methyltransferase</keyword>
<keyword id="KW-1185">Reference proteome</keyword>
<keyword id="KW-0698">rRNA processing</keyword>
<keyword id="KW-0949">S-adenosyl-L-methionine</keyword>
<keyword id="KW-0808">Transferase</keyword>
<reference key="1">
    <citation type="journal article" date="2005" name="Proc. Natl. Acad. Sci. U.S.A.">
        <title>Complete genome sequence of Vibrio fischeri: a symbiotic bacterium with pathogenic congeners.</title>
        <authorList>
            <person name="Ruby E.G."/>
            <person name="Urbanowski M."/>
            <person name="Campbell J."/>
            <person name="Dunn A."/>
            <person name="Faini M."/>
            <person name="Gunsalus R."/>
            <person name="Lostroh P."/>
            <person name="Lupp C."/>
            <person name="McCann J."/>
            <person name="Millikan D."/>
            <person name="Schaefer A."/>
            <person name="Stabb E."/>
            <person name="Stevens A."/>
            <person name="Visick K."/>
            <person name="Whistler C."/>
            <person name="Greenberg E.P."/>
        </authorList>
    </citation>
    <scope>NUCLEOTIDE SEQUENCE [LARGE SCALE GENOMIC DNA]</scope>
    <source>
        <strain>ATCC 700601 / ES114</strain>
    </source>
</reference>
<evidence type="ECO:0000255" key="1">
    <source>
        <dbReference type="HAMAP-Rule" id="MF_01007"/>
    </source>
</evidence>
<protein>
    <recommendedName>
        <fullName evidence="1">Ribosomal RNA small subunit methyltransferase H</fullName>
        <ecNumber evidence="1">2.1.1.199</ecNumber>
    </recommendedName>
    <alternativeName>
        <fullName evidence="1">16S rRNA m(4)C1402 methyltransferase</fullName>
    </alternativeName>
    <alternativeName>
        <fullName evidence="1">rRNA (cytosine-N(4)-)-methyltransferase RsmH</fullName>
    </alternativeName>
</protein>
<proteinExistence type="inferred from homology"/>